<name>ARGR_SHISS</name>
<dbReference type="EMBL" id="CP000038">
    <property type="protein sequence ID" value="AAZ89952.1"/>
    <property type="molecule type" value="Genomic_DNA"/>
</dbReference>
<dbReference type="RefSeq" id="WP_001257846.1">
    <property type="nucleotide sequence ID" value="NC_007384.1"/>
</dbReference>
<dbReference type="SMR" id="Q3YX10"/>
<dbReference type="GeneID" id="93778748"/>
<dbReference type="KEGG" id="ssn:SSON_3379"/>
<dbReference type="HOGENOM" id="CLU_097103_2_0_6"/>
<dbReference type="UniPathway" id="UPA00068"/>
<dbReference type="Proteomes" id="UP000002529">
    <property type="component" value="Chromosome"/>
</dbReference>
<dbReference type="GO" id="GO:0005737">
    <property type="term" value="C:cytoplasm"/>
    <property type="evidence" value="ECO:0007669"/>
    <property type="project" value="UniProtKB-SubCell"/>
</dbReference>
<dbReference type="GO" id="GO:0034618">
    <property type="term" value="F:arginine binding"/>
    <property type="evidence" value="ECO:0007669"/>
    <property type="project" value="InterPro"/>
</dbReference>
<dbReference type="GO" id="GO:0003677">
    <property type="term" value="F:DNA binding"/>
    <property type="evidence" value="ECO:0007669"/>
    <property type="project" value="UniProtKB-KW"/>
</dbReference>
<dbReference type="GO" id="GO:0003700">
    <property type="term" value="F:DNA-binding transcription factor activity"/>
    <property type="evidence" value="ECO:0007669"/>
    <property type="project" value="UniProtKB-UniRule"/>
</dbReference>
<dbReference type="GO" id="GO:0006526">
    <property type="term" value="P:L-arginine biosynthetic process"/>
    <property type="evidence" value="ECO:0007669"/>
    <property type="project" value="UniProtKB-UniPathway"/>
</dbReference>
<dbReference type="GO" id="GO:0051259">
    <property type="term" value="P:protein complex oligomerization"/>
    <property type="evidence" value="ECO:0007669"/>
    <property type="project" value="InterPro"/>
</dbReference>
<dbReference type="GO" id="GO:1900079">
    <property type="term" value="P:regulation of arginine biosynthetic process"/>
    <property type="evidence" value="ECO:0007669"/>
    <property type="project" value="UniProtKB-UniRule"/>
</dbReference>
<dbReference type="FunFam" id="1.10.10.10:FF:000074">
    <property type="entry name" value="Arginine repressor"/>
    <property type="match status" value="1"/>
</dbReference>
<dbReference type="FunFam" id="3.30.1360.40:FF:000004">
    <property type="entry name" value="Arginine repressor"/>
    <property type="match status" value="1"/>
</dbReference>
<dbReference type="Gene3D" id="3.30.1360.40">
    <property type="match status" value="1"/>
</dbReference>
<dbReference type="Gene3D" id="1.10.10.10">
    <property type="entry name" value="Winged helix-like DNA-binding domain superfamily/Winged helix DNA-binding domain"/>
    <property type="match status" value="1"/>
</dbReference>
<dbReference type="HAMAP" id="MF_00173">
    <property type="entry name" value="Arg_repressor"/>
    <property type="match status" value="1"/>
</dbReference>
<dbReference type="InterPro" id="IPR001669">
    <property type="entry name" value="Arg_repress"/>
</dbReference>
<dbReference type="InterPro" id="IPR020899">
    <property type="entry name" value="Arg_repress_C"/>
</dbReference>
<dbReference type="InterPro" id="IPR036251">
    <property type="entry name" value="Arg_repress_C_sf"/>
</dbReference>
<dbReference type="InterPro" id="IPR020900">
    <property type="entry name" value="Arg_repress_DNA-bd"/>
</dbReference>
<dbReference type="InterPro" id="IPR036388">
    <property type="entry name" value="WH-like_DNA-bd_sf"/>
</dbReference>
<dbReference type="InterPro" id="IPR036390">
    <property type="entry name" value="WH_DNA-bd_sf"/>
</dbReference>
<dbReference type="NCBIfam" id="TIGR01529">
    <property type="entry name" value="argR_whole"/>
    <property type="match status" value="1"/>
</dbReference>
<dbReference type="NCBIfam" id="NF003457">
    <property type="entry name" value="PRK05066.1"/>
    <property type="match status" value="1"/>
</dbReference>
<dbReference type="PANTHER" id="PTHR34471">
    <property type="entry name" value="ARGININE REPRESSOR"/>
    <property type="match status" value="1"/>
</dbReference>
<dbReference type="PANTHER" id="PTHR34471:SF1">
    <property type="entry name" value="ARGININE REPRESSOR"/>
    <property type="match status" value="1"/>
</dbReference>
<dbReference type="Pfam" id="PF01316">
    <property type="entry name" value="Arg_repressor"/>
    <property type="match status" value="1"/>
</dbReference>
<dbReference type="Pfam" id="PF02863">
    <property type="entry name" value="Arg_repressor_C"/>
    <property type="match status" value="1"/>
</dbReference>
<dbReference type="PRINTS" id="PR01467">
    <property type="entry name" value="ARGREPRESSOR"/>
</dbReference>
<dbReference type="SUPFAM" id="SSF55252">
    <property type="entry name" value="C-terminal domain of arginine repressor"/>
    <property type="match status" value="1"/>
</dbReference>
<dbReference type="SUPFAM" id="SSF46785">
    <property type="entry name" value="Winged helix' DNA-binding domain"/>
    <property type="match status" value="1"/>
</dbReference>
<protein>
    <recommendedName>
        <fullName evidence="1">Arginine repressor</fullName>
    </recommendedName>
</protein>
<proteinExistence type="inferred from homology"/>
<reference key="1">
    <citation type="journal article" date="2005" name="Nucleic Acids Res.">
        <title>Genome dynamics and diversity of Shigella species, the etiologic agents of bacillary dysentery.</title>
        <authorList>
            <person name="Yang F."/>
            <person name="Yang J."/>
            <person name="Zhang X."/>
            <person name="Chen L."/>
            <person name="Jiang Y."/>
            <person name="Yan Y."/>
            <person name="Tang X."/>
            <person name="Wang J."/>
            <person name="Xiong Z."/>
            <person name="Dong J."/>
            <person name="Xue Y."/>
            <person name="Zhu Y."/>
            <person name="Xu X."/>
            <person name="Sun L."/>
            <person name="Chen S."/>
            <person name="Nie H."/>
            <person name="Peng J."/>
            <person name="Xu J."/>
            <person name="Wang Y."/>
            <person name="Yuan Z."/>
            <person name="Wen Y."/>
            <person name="Yao Z."/>
            <person name="Shen Y."/>
            <person name="Qiang B."/>
            <person name="Hou Y."/>
            <person name="Yu J."/>
            <person name="Jin Q."/>
        </authorList>
    </citation>
    <scope>NUCLEOTIDE SEQUENCE [LARGE SCALE GENOMIC DNA]</scope>
    <source>
        <strain>Ss046</strain>
    </source>
</reference>
<accession>Q3YX10</accession>
<sequence length="156" mass="16995">MRSSAKQEELVKAFKALLKEEKFSSQGEIVAALQEQGFDNINQSKVSRMLTKFGAVRTRNAKMEMVYCLPAELGVPTTSSPLKNLVLDIDYNDAVVVIHTSPGAAQLIARLLDSLGKAEGILGTIAGDDTIFTTPANGFTVKDLYEAILELFDQEL</sequence>
<evidence type="ECO:0000255" key="1">
    <source>
        <dbReference type="HAMAP-Rule" id="MF_00173"/>
    </source>
</evidence>
<comment type="function">
    <text evidence="1">Regulates arginine biosynthesis genes.</text>
</comment>
<comment type="pathway">
    <text>Amino-acid biosynthesis; L-arginine biosynthesis [regulation].</text>
</comment>
<comment type="subcellular location">
    <subcellularLocation>
        <location evidence="1">Cytoplasm</location>
    </subcellularLocation>
</comment>
<comment type="similarity">
    <text evidence="1">Belongs to the ArgR family.</text>
</comment>
<organism>
    <name type="scientific">Shigella sonnei (strain Ss046)</name>
    <dbReference type="NCBI Taxonomy" id="300269"/>
    <lineage>
        <taxon>Bacteria</taxon>
        <taxon>Pseudomonadati</taxon>
        <taxon>Pseudomonadota</taxon>
        <taxon>Gammaproteobacteria</taxon>
        <taxon>Enterobacterales</taxon>
        <taxon>Enterobacteriaceae</taxon>
        <taxon>Shigella</taxon>
    </lineage>
</organism>
<feature type="chain" id="PRO_1000023600" description="Arginine repressor">
    <location>
        <begin position="1"/>
        <end position="156"/>
    </location>
</feature>
<keyword id="KW-0028">Amino-acid biosynthesis</keyword>
<keyword id="KW-0055">Arginine biosynthesis</keyword>
<keyword id="KW-0963">Cytoplasm</keyword>
<keyword id="KW-0238">DNA-binding</keyword>
<keyword id="KW-1185">Reference proteome</keyword>
<keyword id="KW-0678">Repressor</keyword>
<keyword id="KW-0804">Transcription</keyword>
<keyword id="KW-0805">Transcription regulation</keyword>
<gene>
    <name evidence="1" type="primary">argR</name>
    <name type="ordered locus">SSON_3379</name>
</gene>